<proteinExistence type="evidence at protein level"/>
<keyword id="KW-1015">Disulfide bond</keyword>
<keyword id="KW-0325">Glycoprotein</keyword>
<keyword id="KW-0378">Hydrolase</keyword>
<keyword id="KW-1185">Reference proteome</keyword>
<keyword id="KW-0964">Secreted</keyword>
<keyword id="KW-0732">Signal</keyword>
<gene>
    <name evidence="7" type="primary">phyA</name>
    <name type="ORF">AN1685</name>
</gene>
<evidence type="ECO:0000250" key="1">
    <source>
        <dbReference type="UniProtKB" id="O00085"/>
    </source>
</evidence>
<evidence type="ECO:0000250" key="2">
    <source>
        <dbReference type="UniProtKB" id="O00092"/>
    </source>
</evidence>
<evidence type="ECO:0000250" key="3">
    <source>
        <dbReference type="UniProtKB" id="P34752"/>
    </source>
</evidence>
<evidence type="ECO:0000255" key="4"/>
<evidence type="ECO:0000269" key="5">
    <source>
    </source>
</evidence>
<evidence type="ECO:0000269" key="6">
    <source>
    </source>
</evidence>
<evidence type="ECO:0000303" key="7">
    <source>
    </source>
</evidence>
<evidence type="ECO:0000303" key="8">
    <source>
    </source>
</evidence>
<evidence type="ECO:0000305" key="9"/>
<name>PHYA_EMENI</name>
<protein>
    <recommendedName>
        <fullName evidence="7">Phytase A</fullName>
        <ecNumber evidence="6">3.1.3.-</ecNumber>
        <ecNumber evidence="5 6">3.1.3.8</ecNumber>
    </recommendedName>
    <alternativeName>
        <fullName evidence="7">Histidine acid phosphatase phyA</fullName>
        <shortName evidence="7">HAP</shortName>
    </alternativeName>
    <alternativeName>
        <fullName evidence="8">Myo-inositol hexakisphosphate phosphohydrolase A</fullName>
    </alternativeName>
    <alternativeName>
        <fullName evidence="8">Myo-inositol-hexaphosphate 3-phosphohydrolase A</fullName>
    </alternativeName>
</protein>
<comment type="function">
    <text evidence="5 6">Catalyzes the phosphate monoester hydrolysis of phytic acid (myo-inositol hexakisphosphate), which results in the stepwise formation of myo-inositol pentakis-, tetrakis-, tris-, bis-, and monophosphates, as well as the liberation of inorganic phosphate (PubMed:9349716, PubMed:9925555). Myo-inositol 2-monophosphate is the end product (PubMed:9925555). Has a broad substrate specificity and is also able to dephosphorylate other classic acid phosphatase substrates such as p-nitrophenyl phosphate, phenyl phosphate, fructose 1,6-bisphosphate, fructose 6-phosphate, glucose 6-phosphate, ribose 5-phosphate, alpha-glycerophosphate, beta-glycerophosphate, 3-phosphoglycerate, as well as ADP and ATP (PubMed:9925555).</text>
</comment>
<comment type="catalytic activity">
    <reaction evidence="5 6">
        <text>1D-myo-inositol hexakisphosphate + H2O = 1D-myo-inositol 1,2,4,5,6-pentakisphosphate + phosphate</text>
        <dbReference type="Rhea" id="RHEA:16989"/>
        <dbReference type="ChEBI" id="CHEBI:15377"/>
        <dbReference type="ChEBI" id="CHEBI:43474"/>
        <dbReference type="ChEBI" id="CHEBI:57798"/>
        <dbReference type="ChEBI" id="CHEBI:58130"/>
        <dbReference type="EC" id="3.1.3.8"/>
    </reaction>
    <physiologicalReaction direction="left-to-right" evidence="5 6">
        <dbReference type="Rhea" id="RHEA:16990"/>
    </physiologicalReaction>
</comment>
<comment type="catalytic activity">
    <reaction evidence="6">
        <text>1D-myo-inositol 1,2,4,5,6-pentakisphosphate + H2O = 1D-myo-inositol 1,2,5,6-tetrakisphosphate + phosphate</text>
        <dbReference type="Rhea" id="RHEA:77115"/>
        <dbReference type="ChEBI" id="CHEBI:15377"/>
        <dbReference type="ChEBI" id="CHEBI:43474"/>
        <dbReference type="ChEBI" id="CHEBI:57798"/>
        <dbReference type="ChEBI" id="CHEBI:195535"/>
    </reaction>
    <physiologicalReaction direction="left-to-right" evidence="6">
        <dbReference type="Rhea" id="RHEA:77116"/>
    </physiologicalReaction>
</comment>
<comment type="catalytic activity">
    <reaction evidence="6">
        <text>1D-myo-inositol 1,2,5,6-tetrakisphosphate + H2O = 1D-myo-inositol 1,2,6-trisphosphate + phosphate</text>
        <dbReference type="Rhea" id="RHEA:77119"/>
        <dbReference type="ChEBI" id="CHEBI:15377"/>
        <dbReference type="ChEBI" id="CHEBI:43474"/>
        <dbReference type="ChEBI" id="CHEBI:195535"/>
        <dbReference type="ChEBI" id="CHEBI:195537"/>
    </reaction>
    <physiologicalReaction direction="left-to-right" evidence="6">
        <dbReference type="Rhea" id="RHEA:77120"/>
    </physiologicalReaction>
</comment>
<comment type="catalytic activity">
    <reaction evidence="6">
        <text>1D-myo-inositol 1,2,6-trisphosphate + H2O = 1D-myo-inositol 1,2-bisphosphate + phosphate</text>
        <dbReference type="Rhea" id="RHEA:77131"/>
        <dbReference type="ChEBI" id="CHEBI:15377"/>
        <dbReference type="ChEBI" id="CHEBI:43474"/>
        <dbReference type="ChEBI" id="CHEBI:195537"/>
        <dbReference type="ChEBI" id="CHEBI:195539"/>
    </reaction>
    <physiologicalReaction direction="left-to-right" evidence="6">
        <dbReference type="Rhea" id="RHEA:77132"/>
    </physiologicalReaction>
</comment>
<comment type="catalytic activity">
    <reaction evidence="6">
        <text>1D-myo-inositol 1,2-bisphosphate + H2O = 1D-myo-inositol 2-phosphate + phosphate</text>
        <dbReference type="Rhea" id="RHEA:77135"/>
        <dbReference type="ChEBI" id="CHEBI:15377"/>
        <dbReference type="ChEBI" id="CHEBI:43474"/>
        <dbReference type="ChEBI" id="CHEBI:84142"/>
        <dbReference type="ChEBI" id="CHEBI:195539"/>
    </reaction>
    <physiologicalReaction direction="left-to-right" evidence="6">
        <dbReference type="Rhea" id="RHEA:77136"/>
    </physiologicalReaction>
</comment>
<comment type="biophysicochemical properties">
    <phDependence>
        <text evidence="6">Optimum pH is 6.5.</text>
    </phDependence>
</comment>
<comment type="subunit">
    <text evidence="1">Monomer.</text>
</comment>
<comment type="subcellular location">
    <subcellularLocation>
        <location evidence="9">Secreted</location>
    </subcellularLocation>
</comment>
<comment type="PTM">
    <text evidence="5">Seems to be cleaved into at least two pieces, most likely due to proteases in the supernatant. The N-terminal fragment, called phyB seems to retain phytase activity.</text>
</comment>
<comment type="biotechnology">
    <text evidence="6">Phytic acid is the major storage form of phosphorus in plant seeds and, thus, in seed-based animal feed. Phytases are therefore of considerable economic interest.</text>
</comment>
<comment type="similarity">
    <text evidence="9">Belongs to the histidine acid phosphatase family.</text>
</comment>
<accession>O00093</accession>
<accession>C8VNT4</accession>
<accession>Q5BCP5</accession>
<feature type="signal peptide" evidence="4">
    <location>
        <begin position="1"/>
        <end position="19"/>
    </location>
</feature>
<feature type="chain" id="PRO_0000023976" description="Phytase A">
    <location>
        <begin position="20"/>
        <end position="463"/>
    </location>
</feature>
<feature type="active site" description="Nucleophile" evidence="2">
    <location>
        <position position="80"/>
    </location>
</feature>
<feature type="binding site" evidence="3">
    <location>
        <position position="48"/>
    </location>
    <ligand>
        <name>1D-myo-inositol hexakisphosphate</name>
        <dbReference type="ChEBI" id="CHEBI:58130"/>
    </ligand>
</feature>
<feature type="binding site" evidence="3">
    <location>
        <position position="49"/>
    </location>
    <ligand>
        <name>1D-myo-inositol hexakisphosphate</name>
        <dbReference type="ChEBI" id="CHEBI:58130"/>
    </ligand>
</feature>
<feature type="binding site" evidence="3">
    <location>
        <position position="79"/>
    </location>
    <ligand>
        <name>1D-myo-inositol hexakisphosphate</name>
        <dbReference type="ChEBI" id="CHEBI:58130"/>
    </ligand>
</feature>
<feature type="binding site" evidence="3">
    <location>
        <position position="80"/>
    </location>
    <ligand>
        <name>1D-myo-inositol hexakisphosphate</name>
        <dbReference type="ChEBI" id="CHEBI:58130"/>
    </ligand>
</feature>
<feature type="binding site" evidence="3">
    <location>
        <position position="83"/>
    </location>
    <ligand>
        <name>1D-myo-inositol hexakisphosphate</name>
        <dbReference type="ChEBI" id="CHEBI:58130"/>
    </ligand>
</feature>
<feature type="binding site" evidence="3">
    <location>
        <position position="86"/>
    </location>
    <ligand>
        <name>1D-myo-inositol hexakisphosphate</name>
        <dbReference type="ChEBI" id="CHEBI:58130"/>
    </ligand>
</feature>
<feature type="binding site" evidence="3">
    <location>
        <position position="163"/>
    </location>
    <ligand>
        <name>1D-myo-inositol hexakisphosphate</name>
        <dbReference type="ChEBI" id="CHEBI:58130"/>
    </ligand>
</feature>
<feature type="binding site" evidence="3">
    <location>
        <position position="207"/>
    </location>
    <ligand>
        <name>1D-myo-inositol hexakisphosphate</name>
        <dbReference type="ChEBI" id="CHEBI:58130"/>
    </ligand>
</feature>
<feature type="binding site" evidence="3">
    <location>
        <position position="297"/>
    </location>
    <ligand>
        <name>1D-myo-inositol hexakisphosphate</name>
        <dbReference type="ChEBI" id="CHEBI:58130"/>
    </ligand>
</feature>
<feature type="binding site" evidence="3">
    <location>
        <position position="357"/>
    </location>
    <ligand>
        <name>1D-myo-inositol hexakisphosphate</name>
        <dbReference type="ChEBI" id="CHEBI:58130"/>
    </ligand>
</feature>
<feature type="binding site" evidence="3">
    <location>
        <position position="358"/>
    </location>
    <ligand>
        <name>1D-myo-inositol hexakisphosphate</name>
        <dbReference type="ChEBI" id="CHEBI:58130"/>
    </ligand>
</feature>
<feature type="glycosylation site" description="N-linked (GlcNAc...) asparagine" evidence="4">
    <location>
        <position position="26"/>
    </location>
</feature>
<feature type="glycosylation site" description="N-linked (GlcNAc...) asparagine" evidence="4">
    <location>
        <position position="41"/>
    </location>
</feature>
<feature type="glycosylation site" description="N-linked (GlcNAc...) asparagine" evidence="4">
    <location>
        <position position="103"/>
    </location>
</feature>
<feature type="glycosylation site" description="N-linked (GlcNAc...) asparagine" evidence="4">
    <location>
        <position position="118"/>
    </location>
</feature>
<feature type="glycosylation site" description="N-linked (GlcNAc...) asparagine" evidence="4">
    <location>
        <position position="203"/>
    </location>
</feature>
<feature type="glycosylation site" description="N-linked (GlcNAc...) asparagine" evidence="4">
    <location>
        <position position="226"/>
    </location>
</feature>
<feature type="glycosylation site" description="N-linked (GlcNAc...) asparagine" evidence="4">
    <location>
        <position position="331"/>
    </location>
</feature>
<feature type="glycosylation site" description="N-linked (GlcNAc...) asparagine" evidence="4">
    <location>
        <position position="335"/>
    </location>
</feature>
<feature type="glycosylation site" description="N-linked (GlcNAc...) asparagine" evidence="4">
    <location>
        <position position="372"/>
    </location>
</feature>
<feature type="disulfide bond" evidence="2">
    <location>
        <begin position="29"/>
        <end position="38"/>
    </location>
</feature>
<feature type="disulfide bond" evidence="2">
    <location>
        <begin position="69"/>
        <end position="410"/>
    </location>
</feature>
<feature type="disulfide bond" evidence="2">
    <location>
        <begin position="211"/>
        <end position="460"/>
    </location>
</feature>
<feature type="disulfide bond" evidence="2">
    <location>
        <begin position="260"/>
        <end position="278"/>
    </location>
</feature>
<feature type="disulfide bond" evidence="2">
    <location>
        <begin position="431"/>
        <end position="439"/>
    </location>
</feature>
<feature type="sequence conflict" description="In Ref. 1; AAB96871." evidence="9" ref="1">
    <original>T</original>
    <variation>A</variation>
    <location>
        <position position="19"/>
    </location>
</feature>
<sequence>MAFFTVALSLYYLLSRVSTQAPVVQNHSCNTADGGYQCFPNVSHVWGQYSPYFSIEQESAISEDVPHGCEVTFVQVLSRHGARYPTESKSKAYSGLIEAIQKNATSFWGQYAFLESYNYTLGADDLTIFGENQMVDSGAKFYRRYKNLARKNTPFIRASGSDRVVASAEKFINGFRKAQLHDHGSKRATPVVNVIIPEIDGFNNTLDHSTCVSFENDERADEIEANFTAIMGPPIRKRLENDLPGIKLTNENVIYLMDMCSFDTMARTAHGTELSPFCAIFTEKEWLQYDYLQSLSKYYGYGAGSPLGPAQGIGFTNELIARLTQSPVQDNTSTNHTLDSNPATFPLDRKLYADFSHDNSMISIFFAMGLYNGTQPLSMDSVESIQEMDGYAASWTVPFGARAYFELMQCEKKEPLVRVLVNDRVVPLHGCAVDKFGRCTLDDWVEGLNFARSGGNWKTCFTL</sequence>
<reference key="1">
    <citation type="journal article" date="1997" name="Biochim. Biophys. Acta">
        <title>Cloning of the phytases from Emericella nidulans and the thermophilic fungus Talaromyces thermophilus.</title>
        <authorList>
            <person name="Pasamontes L."/>
            <person name="Haiker M."/>
            <person name="Henriquez-Huecas M."/>
            <person name="Mitchell D.B."/>
            <person name="van Loon A.P.G.M."/>
        </authorList>
    </citation>
    <scope>NUCLEOTIDE SEQUENCE [GENOMIC DNA]</scope>
    <scope>CLEAVAGE</scope>
    <scope>CATALYTIC ACTIVITY</scope>
</reference>
<reference key="2">
    <citation type="journal article" date="2005" name="Nature">
        <title>Sequencing of Aspergillus nidulans and comparative analysis with A. fumigatus and A. oryzae.</title>
        <authorList>
            <person name="Galagan J.E."/>
            <person name="Calvo S.E."/>
            <person name="Cuomo C."/>
            <person name="Ma L.-J."/>
            <person name="Wortman J.R."/>
            <person name="Batzoglou S."/>
            <person name="Lee S.-I."/>
            <person name="Bastuerkmen M."/>
            <person name="Spevak C.C."/>
            <person name="Clutterbuck J."/>
            <person name="Kapitonov V."/>
            <person name="Jurka J."/>
            <person name="Scazzocchio C."/>
            <person name="Farman M.L."/>
            <person name="Butler J."/>
            <person name="Purcell S."/>
            <person name="Harris S."/>
            <person name="Braus G.H."/>
            <person name="Draht O."/>
            <person name="Busch S."/>
            <person name="D'Enfert C."/>
            <person name="Bouchier C."/>
            <person name="Goldman G.H."/>
            <person name="Bell-Pedersen D."/>
            <person name="Griffiths-Jones S."/>
            <person name="Doonan J.H."/>
            <person name="Yu J."/>
            <person name="Vienken K."/>
            <person name="Pain A."/>
            <person name="Freitag M."/>
            <person name="Selker E.U."/>
            <person name="Archer D.B."/>
            <person name="Penalva M.A."/>
            <person name="Oakley B.R."/>
            <person name="Momany M."/>
            <person name="Tanaka T."/>
            <person name="Kumagai T."/>
            <person name="Asai K."/>
            <person name="Machida M."/>
            <person name="Nierman W.C."/>
            <person name="Denning D.W."/>
            <person name="Caddick M.X."/>
            <person name="Hynes M."/>
            <person name="Paoletti M."/>
            <person name="Fischer R."/>
            <person name="Miller B.L."/>
            <person name="Dyer P.S."/>
            <person name="Sachs M.S."/>
            <person name="Osmani S.A."/>
            <person name="Birren B.W."/>
        </authorList>
    </citation>
    <scope>NUCLEOTIDE SEQUENCE [LARGE SCALE GENOMIC DNA]</scope>
    <source>
        <strain>FGSC A4 / ATCC 38163 / CBS 112.46 / NRRL 194 / M139</strain>
    </source>
</reference>
<reference key="3">
    <citation type="journal article" date="2009" name="Fungal Genet. Biol.">
        <title>The 2008 update of the Aspergillus nidulans genome annotation: a community effort.</title>
        <authorList>
            <person name="Wortman J.R."/>
            <person name="Gilsenan J.M."/>
            <person name="Joardar V."/>
            <person name="Deegan J."/>
            <person name="Clutterbuck J."/>
            <person name="Andersen M.R."/>
            <person name="Archer D."/>
            <person name="Bencina M."/>
            <person name="Braus G."/>
            <person name="Coutinho P."/>
            <person name="von Dohren H."/>
            <person name="Doonan J."/>
            <person name="Driessen A.J."/>
            <person name="Durek P."/>
            <person name="Espeso E."/>
            <person name="Fekete E."/>
            <person name="Flipphi M."/>
            <person name="Estrada C.G."/>
            <person name="Geysens S."/>
            <person name="Goldman G."/>
            <person name="de Groot P.W."/>
            <person name="Hansen K."/>
            <person name="Harris S.D."/>
            <person name="Heinekamp T."/>
            <person name="Helmstaedt K."/>
            <person name="Henrissat B."/>
            <person name="Hofmann G."/>
            <person name="Homan T."/>
            <person name="Horio T."/>
            <person name="Horiuchi H."/>
            <person name="James S."/>
            <person name="Jones M."/>
            <person name="Karaffa L."/>
            <person name="Karanyi Z."/>
            <person name="Kato M."/>
            <person name="Keller N."/>
            <person name="Kelly D.E."/>
            <person name="Kiel J.A."/>
            <person name="Kim J.M."/>
            <person name="van der Klei I.J."/>
            <person name="Klis F.M."/>
            <person name="Kovalchuk A."/>
            <person name="Krasevec N."/>
            <person name="Kubicek C.P."/>
            <person name="Liu B."/>
            <person name="Maccabe A."/>
            <person name="Meyer V."/>
            <person name="Mirabito P."/>
            <person name="Miskei M."/>
            <person name="Mos M."/>
            <person name="Mullins J."/>
            <person name="Nelson D.R."/>
            <person name="Nielsen J."/>
            <person name="Oakley B.R."/>
            <person name="Osmani S.A."/>
            <person name="Pakula T."/>
            <person name="Paszewski A."/>
            <person name="Paulsen I."/>
            <person name="Pilsyk S."/>
            <person name="Pocsi I."/>
            <person name="Punt P.J."/>
            <person name="Ram A.F."/>
            <person name="Ren Q."/>
            <person name="Robellet X."/>
            <person name="Robson G."/>
            <person name="Seiboth B."/>
            <person name="van Solingen P."/>
            <person name="Specht T."/>
            <person name="Sun J."/>
            <person name="Taheri-Talesh N."/>
            <person name="Takeshita N."/>
            <person name="Ussery D."/>
            <person name="vanKuyk P.A."/>
            <person name="Visser H."/>
            <person name="van de Vondervoort P.J."/>
            <person name="de Vries R.P."/>
            <person name="Walton J."/>
            <person name="Xiang X."/>
            <person name="Xiong Y."/>
            <person name="Zeng A.P."/>
            <person name="Brandt B.W."/>
            <person name="Cornell M.J."/>
            <person name="van den Hondel C.A."/>
            <person name="Visser J."/>
            <person name="Oliver S.G."/>
            <person name="Turner G."/>
        </authorList>
    </citation>
    <scope>GENOME REANNOTATION</scope>
    <source>
        <strain>FGSC A4 / ATCC 38163 / CBS 112.46 / NRRL 194 / M139</strain>
    </source>
</reference>
<reference key="4">
    <citation type="journal article" date="1999" name="Appl. Environ. Microbiol.">
        <title>Biochemical characterization of fungal phytases (myo-inositol hexakisphosphate phosphohydrolases): catalytic properties.</title>
        <authorList>
            <person name="Wyss M."/>
            <person name="Brugger R."/>
            <person name="Kronenberger A."/>
            <person name="Remy R."/>
            <person name="Fimbel R."/>
            <person name="Oesterhelt G."/>
            <person name="Lehmann M."/>
            <person name="van Loon A.P.G.M."/>
        </authorList>
    </citation>
    <scope>FUNCTION</scope>
    <scope>CATALYTIC ACTIVITY</scope>
    <scope>BIOPHYSICOCHEMICAL PROPERTIES</scope>
    <scope>BIOTECHNOLOGY</scope>
</reference>
<organism>
    <name type="scientific">Emericella nidulans (strain FGSC A4 / ATCC 38163 / CBS 112.46 / NRRL 194 / M139)</name>
    <name type="common">Aspergillus nidulans</name>
    <dbReference type="NCBI Taxonomy" id="227321"/>
    <lineage>
        <taxon>Eukaryota</taxon>
        <taxon>Fungi</taxon>
        <taxon>Dikarya</taxon>
        <taxon>Ascomycota</taxon>
        <taxon>Pezizomycotina</taxon>
        <taxon>Eurotiomycetes</taxon>
        <taxon>Eurotiomycetidae</taxon>
        <taxon>Eurotiales</taxon>
        <taxon>Aspergillaceae</taxon>
        <taxon>Aspergillus</taxon>
        <taxon>Aspergillus subgen. Nidulantes</taxon>
    </lineage>
</organism>
<dbReference type="EC" id="3.1.3.-" evidence="6"/>
<dbReference type="EC" id="3.1.3.8" evidence="5 6"/>
<dbReference type="EMBL" id="U59803">
    <property type="protein sequence ID" value="AAB96871.1"/>
    <property type="molecule type" value="Genomic_DNA"/>
</dbReference>
<dbReference type="EMBL" id="AACD01000026">
    <property type="protein sequence ID" value="EAA64805.1"/>
    <property type="molecule type" value="Genomic_DNA"/>
</dbReference>
<dbReference type="EMBL" id="BN001307">
    <property type="protein sequence ID" value="CBF85365.1"/>
    <property type="molecule type" value="Genomic_DNA"/>
</dbReference>
<dbReference type="RefSeq" id="XP_659289.1">
    <property type="nucleotide sequence ID" value="XM_654197.1"/>
</dbReference>
<dbReference type="SMR" id="O00093"/>
<dbReference type="STRING" id="227321.O00093"/>
<dbReference type="GlyCosmos" id="O00093">
    <property type="glycosylation" value="9 sites, No reported glycans"/>
</dbReference>
<dbReference type="EnsemblFungi" id="CBF85365">
    <property type="protein sequence ID" value="CBF85365"/>
    <property type="gene ID" value="ANIA_01685"/>
</dbReference>
<dbReference type="KEGG" id="ani:ANIA_01685"/>
<dbReference type="eggNOG" id="KOG1382">
    <property type="taxonomic scope" value="Eukaryota"/>
</dbReference>
<dbReference type="HOGENOM" id="CLU_020880_0_0_1"/>
<dbReference type="InParanoid" id="O00093"/>
<dbReference type="OMA" id="CRVTFAQ"/>
<dbReference type="OrthoDB" id="6509975at2759"/>
<dbReference type="BRENDA" id="3.1.3.26">
    <property type="organism ID" value="517"/>
</dbReference>
<dbReference type="BRENDA" id="3.1.3.8">
    <property type="organism ID" value="517"/>
</dbReference>
<dbReference type="Proteomes" id="UP000000560">
    <property type="component" value="Chromosome VII"/>
</dbReference>
<dbReference type="GO" id="GO:0005576">
    <property type="term" value="C:extracellular region"/>
    <property type="evidence" value="ECO:0007669"/>
    <property type="project" value="UniProtKB-SubCell"/>
</dbReference>
<dbReference type="GO" id="GO:0016158">
    <property type="term" value="F:3-phytase activity"/>
    <property type="evidence" value="ECO:0007669"/>
    <property type="project" value="UniProtKB-EC"/>
</dbReference>
<dbReference type="GO" id="GO:0003993">
    <property type="term" value="F:acid phosphatase activity"/>
    <property type="evidence" value="ECO:0000318"/>
    <property type="project" value="GO_Central"/>
</dbReference>
<dbReference type="CDD" id="cd07061">
    <property type="entry name" value="HP_HAP_like"/>
    <property type="match status" value="1"/>
</dbReference>
<dbReference type="FunFam" id="3.40.50.1240:FF:000027">
    <property type="entry name" value="3-phytase A"/>
    <property type="match status" value="1"/>
</dbReference>
<dbReference type="Gene3D" id="3.40.50.1240">
    <property type="entry name" value="Phosphoglycerate mutase-like"/>
    <property type="match status" value="1"/>
</dbReference>
<dbReference type="InterPro" id="IPR033379">
    <property type="entry name" value="Acid_Pase_AS"/>
</dbReference>
<dbReference type="InterPro" id="IPR000560">
    <property type="entry name" value="His_Pase_clade-2"/>
</dbReference>
<dbReference type="InterPro" id="IPR029033">
    <property type="entry name" value="His_PPase_superfam"/>
</dbReference>
<dbReference type="InterPro" id="IPR016274">
    <property type="entry name" value="Histidine_acid_Pase_euk"/>
</dbReference>
<dbReference type="PANTHER" id="PTHR20963:SF24">
    <property type="entry name" value="3-PHYTASE B"/>
    <property type="match status" value="1"/>
</dbReference>
<dbReference type="PANTHER" id="PTHR20963">
    <property type="entry name" value="MULTIPLE INOSITOL POLYPHOSPHATE PHOSPHATASE-RELATED"/>
    <property type="match status" value="1"/>
</dbReference>
<dbReference type="Pfam" id="PF00328">
    <property type="entry name" value="His_Phos_2"/>
    <property type="match status" value="1"/>
</dbReference>
<dbReference type="PIRSF" id="PIRSF000894">
    <property type="entry name" value="Acid_phosphatase"/>
    <property type="match status" value="1"/>
</dbReference>
<dbReference type="SUPFAM" id="SSF53254">
    <property type="entry name" value="Phosphoglycerate mutase-like"/>
    <property type="match status" value="1"/>
</dbReference>
<dbReference type="PROSITE" id="PS00616">
    <property type="entry name" value="HIS_ACID_PHOSPHAT_1"/>
    <property type="match status" value="1"/>
</dbReference>
<dbReference type="PROSITE" id="PS00778">
    <property type="entry name" value="HIS_ACID_PHOSPHAT_2"/>
    <property type="match status" value="1"/>
</dbReference>